<dbReference type="EMBL" id="AL954747">
    <property type="protein sequence ID" value="CAD84792.1"/>
    <property type="molecule type" value="Genomic_DNA"/>
</dbReference>
<dbReference type="RefSeq" id="WP_011111492.1">
    <property type="nucleotide sequence ID" value="NC_004757.1"/>
</dbReference>
<dbReference type="SMR" id="Q82W18"/>
<dbReference type="STRING" id="228410.NE0881"/>
<dbReference type="GeneID" id="87104072"/>
<dbReference type="KEGG" id="neu:NE0881"/>
<dbReference type="eggNOG" id="COG1452">
    <property type="taxonomic scope" value="Bacteria"/>
</dbReference>
<dbReference type="HOGENOM" id="CLU_009039_0_0_4"/>
<dbReference type="OrthoDB" id="9760225at2"/>
<dbReference type="PhylomeDB" id="Q82W18"/>
<dbReference type="Proteomes" id="UP000001416">
    <property type="component" value="Chromosome"/>
</dbReference>
<dbReference type="GO" id="GO:0009279">
    <property type="term" value="C:cell outer membrane"/>
    <property type="evidence" value="ECO:0007669"/>
    <property type="project" value="UniProtKB-SubCell"/>
</dbReference>
<dbReference type="GO" id="GO:1990351">
    <property type="term" value="C:transporter complex"/>
    <property type="evidence" value="ECO:0007669"/>
    <property type="project" value="TreeGrafter"/>
</dbReference>
<dbReference type="GO" id="GO:0043165">
    <property type="term" value="P:Gram-negative-bacterium-type cell outer membrane assembly"/>
    <property type="evidence" value="ECO:0007669"/>
    <property type="project" value="UniProtKB-UniRule"/>
</dbReference>
<dbReference type="GO" id="GO:0015920">
    <property type="term" value="P:lipopolysaccharide transport"/>
    <property type="evidence" value="ECO:0007669"/>
    <property type="project" value="InterPro"/>
</dbReference>
<dbReference type="Gene3D" id="2.60.450.10">
    <property type="entry name" value="Lipopolysaccharide (LPS) transport protein A like domain"/>
    <property type="match status" value="1"/>
</dbReference>
<dbReference type="HAMAP" id="MF_01411">
    <property type="entry name" value="LPS_assembly_LptD"/>
    <property type="match status" value="1"/>
</dbReference>
<dbReference type="InterPro" id="IPR020889">
    <property type="entry name" value="LipoPS_assembly_LptD"/>
</dbReference>
<dbReference type="InterPro" id="IPR050218">
    <property type="entry name" value="LptD"/>
</dbReference>
<dbReference type="InterPro" id="IPR007543">
    <property type="entry name" value="LptD_C"/>
</dbReference>
<dbReference type="InterPro" id="IPR005653">
    <property type="entry name" value="OstA-like_N"/>
</dbReference>
<dbReference type="PANTHER" id="PTHR30189">
    <property type="entry name" value="LPS-ASSEMBLY PROTEIN"/>
    <property type="match status" value="1"/>
</dbReference>
<dbReference type="PANTHER" id="PTHR30189:SF1">
    <property type="entry name" value="LPS-ASSEMBLY PROTEIN LPTD"/>
    <property type="match status" value="1"/>
</dbReference>
<dbReference type="Pfam" id="PF04453">
    <property type="entry name" value="LptD"/>
    <property type="match status" value="1"/>
</dbReference>
<dbReference type="Pfam" id="PF03968">
    <property type="entry name" value="LptD_N"/>
    <property type="match status" value="1"/>
</dbReference>
<feature type="signal peptide" evidence="1">
    <location>
        <begin position="1"/>
        <end position="23"/>
    </location>
</feature>
<feature type="chain" id="PRO_0000281621" description="LPS-assembly protein LptD">
    <location>
        <begin position="24"/>
        <end position="723"/>
    </location>
</feature>
<protein>
    <recommendedName>
        <fullName evidence="1">LPS-assembly protein LptD</fullName>
    </recommendedName>
</protein>
<reference key="1">
    <citation type="journal article" date="2003" name="J. Bacteriol.">
        <title>Complete genome sequence of the ammonia-oxidizing bacterium and obligate chemolithoautotroph Nitrosomonas europaea.</title>
        <authorList>
            <person name="Chain P."/>
            <person name="Lamerdin J.E."/>
            <person name="Larimer F.W."/>
            <person name="Regala W."/>
            <person name="Lao V."/>
            <person name="Land M.L."/>
            <person name="Hauser L."/>
            <person name="Hooper A.B."/>
            <person name="Klotz M.G."/>
            <person name="Norton J."/>
            <person name="Sayavedra-Soto L.A."/>
            <person name="Arciero D.M."/>
            <person name="Hommes N.G."/>
            <person name="Whittaker M.M."/>
            <person name="Arp D.J."/>
        </authorList>
    </citation>
    <scope>NUCLEOTIDE SEQUENCE [LARGE SCALE GENOMIC DNA]</scope>
    <source>
        <strain>ATCC 19718 / CIP 103999 / KCTC 2705 / NBRC 14298</strain>
    </source>
</reference>
<accession>Q82W18</accession>
<name>LPTD_NITEU</name>
<organism>
    <name type="scientific">Nitrosomonas europaea (strain ATCC 19718 / CIP 103999 / KCTC 2705 / NBRC 14298)</name>
    <dbReference type="NCBI Taxonomy" id="228410"/>
    <lineage>
        <taxon>Bacteria</taxon>
        <taxon>Pseudomonadati</taxon>
        <taxon>Pseudomonadota</taxon>
        <taxon>Betaproteobacteria</taxon>
        <taxon>Nitrosomonadales</taxon>
        <taxon>Nitrosomonadaceae</taxon>
        <taxon>Nitrosomonas</taxon>
    </lineage>
</organism>
<sequence length="723" mass="82766">MNTLKLCLILYACLVLLPVRVMSADLSPASSERQPIYIEADHIDGHYQQEIEAIGNVRMRRGDQTLTADRVKYYQSNENVEVEGNAQLERPDDILWGSYLQMNLNDNTGQLSEPRYLQKDGNGRGDGNLLLLEGENQYRFKKARYTTCPEDDHDWYILADDLEIDKEKKVGTARHASVRFKDVPILYVPWMNFSFGNERKTGFLSPIMGNTSRSGVEVSVPFYWNIAPNYDATITPRLMSRRGVMLNNEFRYIGQTLNGRFLLDYLPNDLETDTTRYGMQLNHFHNLGAGWFGMINYNSASDRNYFRDLGNNILFTSQTNLLQQGFASYFRELGRNGTLTFSTLLQQFQTLQDPRAPIISPFKILPRFTLNAAKRNVYGLDFDFSGSFTHFSHSTLPHGLRTTFLPGVSLPLENSFGFIRPRVSLHHTRYDLNEPANPAANDKHLSRTVPIFSFDSGIVLERDTTLARENFVQTIEPRVFYTYIPYRDQQLLPNFDSAEMDFSYPQLFLERRFSGEDRINDANEITLAVSSRLIHSATGNERLRFSAGQRIRFSDRRVILTSPQVTRAGSDFIAELSGGITQNIKTDTGIQLNQNNFLIEKIRTGISYRPAPGKVINAGYRFTRDVLEQVDLSTQWPFLKKWQGFAAINYSLKDDKLLAGLLGLEYNACCWSLRFVTSHFTTATQRTSTNIFVQLELNDLMRIGTNPVRVLQQTIPGYMRTDL</sequence>
<proteinExistence type="inferred from homology"/>
<comment type="function">
    <text evidence="1">Together with LptE, is involved in the assembly of lipopolysaccharide (LPS) at the surface of the outer membrane.</text>
</comment>
<comment type="subunit">
    <text evidence="1">Component of the lipopolysaccharide transport and assembly complex. Interacts with LptE and LptA.</text>
</comment>
<comment type="subcellular location">
    <subcellularLocation>
        <location evidence="1">Cell outer membrane</location>
    </subcellularLocation>
</comment>
<comment type="similarity">
    <text evidence="1">Belongs to the LptD family.</text>
</comment>
<evidence type="ECO:0000255" key="1">
    <source>
        <dbReference type="HAMAP-Rule" id="MF_01411"/>
    </source>
</evidence>
<keyword id="KW-0998">Cell outer membrane</keyword>
<keyword id="KW-0472">Membrane</keyword>
<keyword id="KW-1185">Reference proteome</keyword>
<keyword id="KW-0732">Signal</keyword>
<gene>
    <name evidence="1" type="primary">lptD</name>
    <name type="synonym">imp</name>
    <name type="synonym">ostA</name>
    <name type="ordered locus">NE0881</name>
</gene>